<organism>
    <name type="scientific">Rattus norvegicus</name>
    <name type="common">Rat</name>
    <dbReference type="NCBI Taxonomy" id="10116"/>
    <lineage>
        <taxon>Eukaryota</taxon>
        <taxon>Metazoa</taxon>
        <taxon>Chordata</taxon>
        <taxon>Craniata</taxon>
        <taxon>Vertebrata</taxon>
        <taxon>Euteleostomi</taxon>
        <taxon>Mammalia</taxon>
        <taxon>Eutheria</taxon>
        <taxon>Euarchontoglires</taxon>
        <taxon>Glires</taxon>
        <taxon>Rodentia</taxon>
        <taxon>Myomorpha</taxon>
        <taxon>Muroidea</taxon>
        <taxon>Muridae</taxon>
        <taxon>Murinae</taxon>
        <taxon>Rattus</taxon>
    </lineage>
</organism>
<proteinExistence type="evidence at protein level"/>
<accession>P26770</accession>
<keyword id="KW-0067">ATP-binding</keyword>
<keyword id="KW-0115">cAMP biosynthesis</keyword>
<keyword id="KW-1003">Cell membrane</keyword>
<keyword id="KW-0963">Cytoplasm</keyword>
<keyword id="KW-0325">Glycoprotein</keyword>
<keyword id="KW-0456">Lyase</keyword>
<keyword id="KW-0460">Magnesium</keyword>
<keyword id="KW-0472">Membrane</keyword>
<keyword id="KW-0479">Metal-binding</keyword>
<keyword id="KW-0547">Nucleotide-binding</keyword>
<keyword id="KW-0597">Phosphoprotein</keyword>
<keyword id="KW-1185">Reference proteome</keyword>
<keyword id="KW-0677">Repeat</keyword>
<keyword id="KW-0812">Transmembrane</keyword>
<keyword id="KW-1133">Transmembrane helix</keyword>
<evidence type="ECO:0000250" key="1">
    <source>
        <dbReference type="UniProtKB" id="P26769"/>
    </source>
</evidence>
<evidence type="ECO:0000250" key="2">
    <source>
        <dbReference type="UniProtKB" id="P30803"/>
    </source>
</evidence>
<evidence type="ECO:0000250" key="3">
    <source>
        <dbReference type="UniProtKB" id="Q8NFM4"/>
    </source>
</evidence>
<evidence type="ECO:0000255" key="4"/>
<evidence type="ECO:0000255" key="5">
    <source>
        <dbReference type="PROSITE-ProRule" id="PRU00099"/>
    </source>
</evidence>
<evidence type="ECO:0000256" key="6">
    <source>
        <dbReference type="SAM" id="MobiDB-lite"/>
    </source>
</evidence>
<evidence type="ECO:0000269" key="7">
    <source>
    </source>
</evidence>
<evidence type="ECO:0000305" key="8"/>
<evidence type="ECO:0007744" key="9">
    <source>
    </source>
</evidence>
<protein>
    <recommendedName>
        <fullName>Adenylate cyclase type 4</fullName>
        <ecNumber evidence="7">4.6.1.1</ecNumber>
    </recommendedName>
    <alternativeName>
        <fullName>ATP pyrophosphate-lyase 4</fullName>
    </alternativeName>
    <alternativeName>
        <fullName>Adenylate cyclase type IV</fullName>
    </alternativeName>
    <alternativeName>
        <fullName>Adenylyl cyclase 4</fullName>
    </alternativeName>
</protein>
<sequence length="1064" mass="118799">MARLFSPRPPPSEDLFYETYYSLSQQYPLLILLLVIVLCAIVALPAVAWASGRELTSDPSFLTTVLCALGGFSLLLGLASREQQLQRWTRPLSGLIWAALLALGYGFLFTGGVVSAWDQVSFFLFIIFTVYAMLPLGMRDAAAAGVISSLSHLLVLGLYLGWRPESQRDLLPQLAANAVLFLCGNVVGAYHKALMERALRATFREALSSLHSRRRLDTEKKHQEHLLLSILPAYLAREMKAEIMARLQAGQSSRPENTNNFHSLYVKRHQGVSVLYADIVGFTRLASECSPKELVLMLNELFGKFDQIAKEHECMRIKILGDCYYCVSGLPLSLPDHAINCVRMGLDMCRAIRKLRVATGVDINMRVGVHSGSVLCGVIGLQKWQYDVWSHDVTLANHMEAGGVPGRVHITGATLALLAGAYAVERADMEHRDPYLRELGEPTYLVIDPWAEEEDEKGTERGLLSSLEGHTMRPSLLMTRYLESWGAAKPFAHLSHVDSPASTSTPLPEKAFSPQWSLDRSRTPRGLHDELDTGDAKFFQVIEQLNSQKQWKQSKDFNLLTLYFREKEMEKQYRLSALPAFKYYAACTFLVFLSNFTIQMLVTTRPPALATTYSITFLLFLLLLFVCFSEHLTKCVQKGPKMLHWLPALSVLVATRPGLRVALGTATILLVFTMAVVSLLFLPVSSDCPFLAPNVSSVAFNTSWELPASLPLISIPYSMHCCVLGFLSCSLFLHMSFELKLLLLLLWLVASCSLFLHSHAWLSDCLIARLYQGSLGSRPGVLKEPKLMGAIYFFIFFFTLLVLARQNEYYCRLDFLWKKKLRQEREETETMENVLPAHVAPQLIGQNRRNEDLYHQSYECVCVLFASIPDFKEFYSESNINHEGLECLRLLNEIIADFDELLSKPKFSGVEKIKTIGSTYMAATGLNATPGQDTQQDAERSCSHLGTMVEFAVALGSKLGVINKHSFNNFRLRVGLNHGPVVAGVIGAQKPQYDIWGNTVNVASRMESTGVLGKIQVTEETARALQSLGYTCYSRGVIKVKGKGQLCTYFLNTDLTRTGSPSAS</sequence>
<feature type="chain" id="PRO_0000195692" description="Adenylate cyclase type 4">
    <location>
        <begin position="1"/>
        <end position="1064"/>
    </location>
</feature>
<feature type="topological domain" description="Cytoplasmic" evidence="4">
    <location>
        <begin position="1"/>
        <end position="28"/>
    </location>
</feature>
<feature type="transmembrane region" description="Helical" evidence="4">
    <location>
        <begin position="29"/>
        <end position="50"/>
    </location>
</feature>
<feature type="transmembrane region" description="Helical" evidence="4">
    <location>
        <begin position="61"/>
        <end position="80"/>
    </location>
</feature>
<feature type="transmembrane region" description="Helical" evidence="4">
    <location>
        <begin position="94"/>
        <end position="117"/>
    </location>
</feature>
<feature type="transmembrane region" description="Helical" evidence="4">
    <location>
        <begin position="120"/>
        <end position="138"/>
    </location>
</feature>
<feature type="transmembrane region" description="Helical" evidence="4">
    <location>
        <begin position="141"/>
        <end position="162"/>
    </location>
</feature>
<feature type="transmembrane region" description="Helical" evidence="4">
    <location>
        <begin position="170"/>
        <end position="190"/>
    </location>
</feature>
<feature type="topological domain" description="Cytoplasmic" evidence="4">
    <location>
        <begin position="191"/>
        <end position="582"/>
    </location>
</feature>
<feature type="transmembrane region" description="Helical" evidence="4">
    <location>
        <begin position="583"/>
        <end position="604"/>
    </location>
</feature>
<feature type="transmembrane region" description="Helical" evidence="4">
    <location>
        <begin position="608"/>
        <end position="630"/>
    </location>
</feature>
<feature type="transmembrane region" description="Helical" evidence="4">
    <location>
        <begin position="661"/>
        <end position="684"/>
    </location>
</feature>
<feature type="topological domain" description="Extracellular" evidence="4">
    <location>
        <begin position="685"/>
        <end position="707"/>
    </location>
</feature>
<feature type="transmembrane region" description="Helical" evidence="4">
    <location>
        <begin position="708"/>
        <end position="733"/>
    </location>
</feature>
<feature type="transmembrane region" description="Helical" evidence="4">
    <location>
        <begin position="741"/>
        <end position="761"/>
    </location>
</feature>
<feature type="transmembrane region" description="Helical" evidence="4">
    <location>
        <begin position="788"/>
        <end position="804"/>
    </location>
</feature>
<feature type="topological domain" description="Cytoplasmic" evidence="4">
    <location>
        <begin position="805"/>
        <end position="1064"/>
    </location>
</feature>
<feature type="region of interest" description="Disordered" evidence="6">
    <location>
        <begin position="498"/>
        <end position="523"/>
    </location>
</feature>
<feature type="binding site" evidence="2">
    <location>
        <begin position="278"/>
        <end position="283"/>
    </location>
    <ligand>
        <name>ATP</name>
        <dbReference type="ChEBI" id="CHEBI:30616"/>
    </ligand>
</feature>
<feature type="binding site" evidence="5">
    <location>
        <position position="278"/>
    </location>
    <ligand>
        <name>Mg(2+)</name>
        <dbReference type="ChEBI" id="CHEBI:18420"/>
        <label>1</label>
        <note>catalytic</note>
    </ligand>
</feature>
<feature type="binding site" evidence="5">
    <location>
        <position position="278"/>
    </location>
    <ligand>
        <name>Mg(2+)</name>
        <dbReference type="ChEBI" id="CHEBI:18420"/>
        <label>2</label>
        <note>catalytic</note>
    </ligand>
</feature>
<feature type="binding site" evidence="5">
    <location>
        <position position="279"/>
    </location>
    <ligand>
        <name>Mg(2+)</name>
        <dbReference type="ChEBI" id="CHEBI:18420"/>
        <label>2</label>
        <note>catalytic</note>
    </ligand>
</feature>
<feature type="binding site" evidence="2">
    <location>
        <begin position="320"/>
        <end position="322"/>
    </location>
    <ligand>
        <name>ATP</name>
        <dbReference type="ChEBI" id="CHEBI:30616"/>
    </ligand>
</feature>
<feature type="binding site" evidence="5">
    <location>
        <position position="322"/>
    </location>
    <ligand>
        <name>Mg(2+)</name>
        <dbReference type="ChEBI" id="CHEBI:18420"/>
        <label>1</label>
        <note>catalytic</note>
    </ligand>
</feature>
<feature type="binding site" evidence="5">
    <location>
        <position position="322"/>
    </location>
    <ligand>
        <name>Mg(2+)</name>
        <dbReference type="ChEBI" id="CHEBI:18420"/>
        <label>2</label>
        <note>catalytic</note>
    </ligand>
</feature>
<feature type="binding site" evidence="2">
    <location>
        <position position="366"/>
    </location>
    <ligand>
        <name>ATP</name>
        <dbReference type="ChEBI" id="CHEBI:30616"/>
    </ligand>
</feature>
<feature type="binding site" evidence="1">
    <location>
        <position position="914"/>
    </location>
    <ligand>
        <name>ATP</name>
        <dbReference type="ChEBI" id="CHEBI:30616"/>
    </ligand>
</feature>
<feature type="binding site" evidence="1">
    <location>
        <begin position="994"/>
        <end position="996"/>
    </location>
    <ligand>
        <name>ATP</name>
        <dbReference type="ChEBI" id="CHEBI:30616"/>
    </ligand>
</feature>
<feature type="binding site" evidence="1">
    <location>
        <begin position="1001"/>
        <end position="1005"/>
    </location>
    <ligand>
        <name>ATP</name>
        <dbReference type="ChEBI" id="CHEBI:30616"/>
    </ligand>
</feature>
<feature type="binding site" evidence="1">
    <location>
        <position position="1041"/>
    </location>
    <ligand>
        <name>ATP</name>
        <dbReference type="ChEBI" id="CHEBI:30616"/>
    </ligand>
</feature>
<feature type="modified residue" description="Phosphoserine" evidence="9">
    <location>
        <position position="517"/>
    </location>
</feature>
<feature type="modified residue" description="Phosphothreonine" evidence="9">
    <location>
        <position position="533"/>
    </location>
</feature>
<feature type="glycosylation site" description="N-linked (GlcNAc...) asparagine" evidence="4">
    <location>
        <position position="694"/>
    </location>
</feature>
<feature type="glycosylation site" description="N-linked (GlcNAc...) asparagine" evidence="4">
    <location>
        <position position="701"/>
    </location>
</feature>
<gene>
    <name type="primary">Adcy4</name>
</gene>
<reference key="1">
    <citation type="journal article" date="1991" name="Proc. Natl. Acad. Sci. U.S.A.">
        <title>Cloning and expression of a widely distributed (type IV) adenylyl cyclase.</title>
        <authorList>
            <person name="Gao B."/>
            <person name="Gilman A.G."/>
        </authorList>
    </citation>
    <scope>NUCLEOTIDE SEQUENCE [MRNA]</scope>
    <scope>CATALYTIC ACTIVITY</scope>
    <scope>FUNCTION</scope>
    <scope>COFACTOR</scope>
    <scope>SUBCELLULAR LOCATION</scope>
    <scope>TISSUE SPECIFICITY</scope>
    <source>
        <tissue>Testis</tissue>
    </source>
</reference>
<reference key="2">
    <citation type="journal article" date="2012" name="Nat. Commun.">
        <title>Quantitative maps of protein phosphorylation sites across 14 different rat organs and tissues.</title>
        <authorList>
            <person name="Lundby A."/>
            <person name="Secher A."/>
            <person name="Lage K."/>
            <person name="Nordsborg N.B."/>
            <person name="Dmytriyev A."/>
            <person name="Lundby C."/>
            <person name="Olsen J.V."/>
        </authorList>
    </citation>
    <scope>PHOSPHORYLATION [LARGE SCALE ANALYSIS] AT SER-517 AND THR-533</scope>
    <scope>IDENTIFICATION BY MASS SPECTROMETRY [LARGE SCALE ANALYSIS]</scope>
</reference>
<comment type="function">
    <text evidence="7">Catalyzes the formation of the signaling molecule cAMP in response to G-protein signaling.</text>
</comment>
<comment type="catalytic activity">
    <reaction evidence="7">
        <text>ATP = 3',5'-cyclic AMP + diphosphate</text>
        <dbReference type="Rhea" id="RHEA:15389"/>
        <dbReference type="ChEBI" id="CHEBI:30616"/>
        <dbReference type="ChEBI" id="CHEBI:33019"/>
        <dbReference type="ChEBI" id="CHEBI:58165"/>
        <dbReference type="EC" id="4.6.1.1"/>
    </reaction>
</comment>
<comment type="cofactor">
    <cofactor evidence="7">
        <name>Mg(2+)</name>
        <dbReference type="ChEBI" id="CHEBI:18420"/>
    </cofactor>
    <cofactor evidence="7">
        <name>Mn(2+)</name>
        <dbReference type="ChEBI" id="CHEBI:29035"/>
    </cofactor>
    <text evidence="2">Binds 2 magnesium ions per subunit. Is also active with manganese (in vitro).</text>
</comment>
<comment type="activity regulation">
    <text evidence="7">Activated by forskolin. Insensitive to calcium/calmodulin. Stimulated by GNAS and by the G-protein beta and gamma subunit complex.</text>
</comment>
<comment type="subcellular location">
    <subcellularLocation>
        <location evidence="7">Cell membrane</location>
        <topology evidence="8">Multi-pass membrane protein</topology>
    </subcellularLocation>
    <subcellularLocation>
        <location evidence="3">Cytoplasm</location>
    </subcellularLocation>
</comment>
<comment type="tissue specificity">
    <text evidence="7">Widely distributed.</text>
</comment>
<comment type="domain">
    <text evidence="2">The protein contains two modules with six transmembrane helices each; both are required for catalytic activity. Isolated N-terminal or C-terminal modules have no catalytic activity, but when they are brought together, enzyme activity is restored. The active site is at the interface of the two modules.</text>
</comment>
<comment type="similarity">
    <text evidence="5">Belongs to the adenylyl cyclase class-4/guanylyl cyclase family.</text>
</comment>
<dbReference type="EC" id="4.6.1.1" evidence="7"/>
<dbReference type="EMBL" id="M80633">
    <property type="protein sequence ID" value="AAA40665.1"/>
    <property type="molecule type" value="mRNA"/>
</dbReference>
<dbReference type="PIR" id="A41542">
    <property type="entry name" value="A41542"/>
</dbReference>
<dbReference type="SMR" id="P26770"/>
<dbReference type="FunCoup" id="P26770">
    <property type="interactions" value="50"/>
</dbReference>
<dbReference type="STRING" id="10116.ENSRNOP00000027719"/>
<dbReference type="BindingDB" id="P26770"/>
<dbReference type="ChEMBL" id="CHEMBL2095179"/>
<dbReference type="DrugCentral" id="P26770"/>
<dbReference type="GlyCosmos" id="P26770">
    <property type="glycosylation" value="2 sites, No reported glycans"/>
</dbReference>
<dbReference type="GlyGen" id="P26770">
    <property type="glycosylation" value="3 sites"/>
</dbReference>
<dbReference type="iPTMnet" id="P26770"/>
<dbReference type="PhosphoSitePlus" id="P26770"/>
<dbReference type="PaxDb" id="10116-ENSRNOP00000027719"/>
<dbReference type="UCSC" id="RGD:2034">
    <property type="organism name" value="rat"/>
</dbReference>
<dbReference type="AGR" id="RGD:2034"/>
<dbReference type="RGD" id="2034">
    <property type="gene designation" value="Adcy4"/>
</dbReference>
<dbReference type="eggNOG" id="KOG3619">
    <property type="taxonomic scope" value="Eukaryota"/>
</dbReference>
<dbReference type="InParanoid" id="P26770"/>
<dbReference type="Reactome" id="R-RNO-163615">
    <property type="pathway name" value="PKA activation"/>
</dbReference>
<dbReference type="Reactome" id="R-RNO-170660">
    <property type="pathway name" value="Adenylate cyclase activating pathway"/>
</dbReference>
<dbReference type="Reactome" id="R-RNO-170670">
    <property type="pathway name" value="Adenylate cyclase inhibitory pathway"/>
</dbReference>
<dbReference type="Reactome" id="R-RNO-418597">
    <property type="pathway name" value="G alpha (z) signalling events"/>
</dbReference>
<dbReference type="Reactome" id="R-RNO-5610787">
    <property type="pathway name" value="Hedgehog 'off' state"/>
</dbReference>
<dbReference type="PRO" id="PR:P26770"/>
<dbReference type="Proteomes" id="UP000002494">
    <property type="component" value="Unplaced"/>
</dbReference>
<dbReference type="GO" id="GO:0005737">
    <property type="term" value="C:cytoplasm"/>
    <property type="evidence" value="ECO:0000266"/>
    <property type="project" value="RGD"/>
</dbReference>
<dbReference type="GO" id="GO:0030425">
    <property type="term" value="C:dendrite"/>
    <property type="evidence" value="ECO:0000266"/>
    <property type="project" value="RGD"/>
</dbReference>
<dbReference type="GO" id="GO:0016020">
    <property type="term" value="C:membrane"/>
    <property type="evidence" value="ECO:0000314"/>
    <property type="project" value="BHF-UCL"/>
</dbReference>
<dbReference type="GO" id="GO:0005886">
    <property type="term" value="C:plasma membrane"/>
    <property type="evidence" value="ECO:0000318"/>
    <property type="project" value="GO_Central"/>
</dbReference>
<dbReference type="GO" id="GO:0032991">
    <property type="term" value="C:protein-containing complex"/>
    <property type="evidence" value="ECO:0000314"/>
    <property type="project" value="RGD"/>
</dbReference>
<dbReference type="GO" id="GO:0004016">
    <property type="term" value="F:adenylate cyclase activity"/>
    <property type="evidence" value="ECO:0000314"/>
    <property type="project" value="BHF-UCL"/>
</dbReference>
<dbReference type="GO" id="GO:0005524">
    <property type="term" value="F:ATP binding"/>
    <property type="evidence" value="ECO:0007669"/>
    <property type="project" value="UniProtKB-KW"/>
</dbReference>
<dbReference type="GO" id="GO:0031683">
    <property type="term" value="F:G-protein beta/gamma-subunit complex binding"/>
    <property type="evidence" value="ECO:0000353"/>
    <property type="project" value="RGD"/>
</dbReference>
<dbReference type="GO" id="GO:0046872">
    <property type="term" value="F:metal ion binding"/>
    <property type="evidence" value="ECO:0007669"/>
    <property type="project" value="UniProtKB-KW"/>
</dbReference>
<dbReference type="GO" id="GO:0005080">
    <property type="term" value="F:protein kinase C binding"/>
    <property type="evidence" value="ECO:0000266"/>
    <property type="project" value="RGD"/>
</dbReference>
<dbReference type="GO" id="GO:0007189">
    <property type="term" value="P:adenylate cyclase-activating G protein-coupled receptor signaling pathway"/>
    <property type="evidence" value="ECO:0000318"/>
    <property type="project" value="GO_Central"/>
</dbReference>
<dbReference type="GO" id="GO:0007188">
    <property type="term" value="P:adenylate cyclase-modulating G protein-coupled receptor signaling pathway"/>
    <property type="evidence" value="ECO:0000266"/>
    <property type="project" value="RGD"/>
</dbReference>
<dbReference type="GO" id="GO:0006171">
    <property type="term" value="P:cAMP biosynthetic process"/>
    <property type="evidence" value="ECO:0000314"/>
    <property type="project" value="BHF-UCL"/>
</dbReference>
<dbReference type="GO" id="GO:0035556">
    <property type="term" value="P:intracellular signal transduction"/>
    <property type="evidence" value="ECO:0000314"/>
    <property type="project" value="RGD"/>
</dbReference>
<dbReference type="CDD" id="cd07302">
    <property type="entry name" value="CHD"/>
    <property type="match status" value="2"/>
</dbReference>
<dbReference type="FunFam" id="3.30.70.1230:FF:000003">
    <property type="entry name" value="Adenylate cyclase"/>
    <property type="match status" value="1"/>
</dbReference>
<dbReference type="FunFam" id="3.30.70.1230:FF:000020">
    <property type="entry name" value="Adenylate cyclase"/>
    <property type="match status" value="1"/>
</dbReference>
<dbReference type="Gene3D" id="3.30.70.1230">
    <property type="entry name" value="Nucleotide cyclase"/>
    <property type="match status" value="2"/>
</dbReference>
<dbReference type="InterPro" id="IPR001054">
    <property type="entry name" value="A/G_cyclase"/>
</dbReference>
<dbReference type="InterPro" id="IPR018297">
    <property type="entry name" value="A/G_cyclase_CS"/>
</dbReference>
<dbReference type="InterPro" id="IPR032628">
    <property type="entry name" value="AC_N"/>
</dbReference>
<dbReference type="InterPro" id="IPR030672">
    <property type="entry name" value="Adcy"/>
</dbReference>
<dbReference type="InterPro" id="IPR009398">
    <property type="entry name" value="Adcy_conserved_dom"/>
</dbReference>
<dbReference type="InterPro" id="IPR029787">
    <property type="entry name" value="Nucleotide_cyclase"/>
</dbReference>
<dbReference type="PANTHER" id="PTHR45627">
    <property type="entry name" value="ADENYLATE CYCLASE TYPE 1"/>
    <property type="match status" value="1"/>
</dbReference>
<dbReference type="PANTHER" id="PTHR45627:SF10">
    <property type="entry name" value="ADENYLATE CYCLASE TYPE 4"/>
    <property type="match status" value="1"/>
</dbReference>
<dbReference type="Pfam" id="PF16214">
    <property type="entry name" value="AC_N"/>
    <property type="match status" value="1"/>
</dbReference>
<dbReference type="Pfam" id="PF06327">
    <property type="entry name" value="Adcy_cons_dom"/>
    <property type="match status" value="1"/>
</dbReference>
<dbReference type="Pfam" id="PF00211">
    <property type="entry name" value="Guanylate_cyc"/>
    <property type="match status" value="2"/>
</dbReference>
<dbReference type="PIRSF" id="PIRSF039050">
    <property type="entry name" value="Ade_cyc"/>
    <property type="match status" value="1"/>
</dbReference>
<dbReference type="SMART" id="SM00044">
    <property type="entry name" value="CYCc"/>
    <property type="match status" value="2"/>
</dbReference>
<dbReference type="SUPFAM" id="SSF55073">
    <property type="entry name" value="Nucleotide cyclase"/>
    <property type="match status" value="2"/>
</dbReference>
<dbReference type="PROSITE" id="PS00452">
    <property type="entry name" value="GUANYLATE_CYCLASE_1"/>
    <property type="match status" value="2"/>
</dbReference>
<dbReference type="PROSITE" id="PS50125">
    <property type="entry name" value="GUANYLATE_CYCLASE_2"/>
    <property type="match status" value="2"/>
</dbReference>
<name>ADCY4_RAT</name>